<name>BGLG_ECOLI</name>
<dbReference type="EMBL" id="M16487">
    <property type="protein sequence ID" value="AAA23509.1"/>
    <property type="molecule type" value="Genomic_DNA"/>
</dbReference>
<dbReference type="EMBL" id="L10328">
    <property type="protein sequence ID" value="AAA62074.1"/>
    <property type="molecule type" value="Genomic_DNA"/>
</dbReference>
<dbReference type="EMBL" id="U00096">
    <property type="protein sequence ID" value="AAC76746.1"/>
    <property type="molecule type" value="Genomic_DNA"/>
</dbReference>
<dbReference type="EMBL" id="AP009048">
    <property type="protein sequence ID" value="BAE77565.1"/>
    <property type="molecule type" value="Genomic_DNA"/>
</dbReference>
<dbReference type="EMBL" id="M17098">
    <property type="protein sequence ID" value="AAA23512.1"/>
    <property type="molecule type" value="Genomic_DNA"/>
</dbReference>
<dbReference type="EMBL" id="M15746">
    <property type="protein sequence ID" value="AAA83836.1"/>
    <property type="status" value="ALT_SEQ"/>
    <property type="molecule type" value="Genomic_DNA"/>
</dbReference>
<dbReference type="PIR" id="B25977">
    <property type="entry name" value="B25977"/>
</dbReference>
<dbReference type="RefSeq" id="NP_418179.1">
    <property type="nucleotide sequence ID" value="NC_000913.3"/>
</dbReference>
<dbReference type="RefSeq" id="WP_001295251.1">
    <property type="nucleotide sequence ID" value="NZ_SSZK01000036.1"/>
</dbReference>
<dbReference type="SMR" id="P11989"/>
<dbReference type="BioGRID" id="4262138">
    <property type="interactions" value="10"/>
</dbReference>
<dbReference type="BioGRID" id="852537">
    <property type="interactions" value="7"/>
</dbReference>
<dbReference type="DIP" id="DIP-9216N"/>
<dbReference type="FunCoup" id="P11989">
    <property type="interactions" value="32"/>
</dbReference>
<dbReference type="IntAct" id="P11989">
    <property type="interactions" value="14"/>
</dbReference>
<dbReference type="MINT" id="P11989"/>
<dbReference type="STRING" id="511145.b3723"/>
<dbReference type="PaxDb" id="511145-b3723"/>
<dbReference type="EnsemblBacteria" id="AAC76746">
    <property type="protein sequence ID" value="AAC76746"/>
    <property type="gene ID" value="b3723"/>
</dbReference>
<dbReference type="GeneID" id="948235"/>
<dbReference type="KEGG" id="ecj:JW3701"/>
<dbReference type="KEGG" id="eco:b3723"/>
<dbReference type="KEGG" id="ecoc:C3026_20180"/>
<dbReference type="PATRIC" id="fig|1411691.4.peg.2978"/>
<dbReference type="EchoBASE" id="EB0114"/>
<dbReference type="eggNOG" id="COG3711">
    <property type="taxonomic scope" value="Bacteria"/>
</dbReference>
<dbReference type="HOGENOM" id="CLU_078802_0_0_6"/>
<dbReference type="InParanoid" id="P11989"/>
<dbReference type="OMA" id="CYNLSWK"/>
<dbReference type="OrthoDB" id="9813552at2"/>
<dbReference type="PhylomeDB" id="P11989"/>
<dbReference type="BioCyc" id="EcoCyc:EG10116-MONOMER"/>
<dbReference type="PHI-base" id="PHI:4630"/>
<dbReference type="PRO" id="PR:P11989"/>
<dbReference type="Proteomes" id="UP000000625">
    <property type="component" value="Chromosome"/>
</dbReference>
<dbReference type="GO" id="GO:0003723">
    <property type="term" value="F:RNA binding"/>
    <property type="evidence" value="ECO:0000314"/>
    <property type="project" value="EcoCyc"/>
</dbReference>
<dbReference type="GO" id="GO:0045893">
    <property type="term" value="P:positive regulation of DNA-templated transcription"/>
    <property type="evidence" value="ECO:0007669"/>
    <property type="project" value="InterPro"/>
</dbReference>
<dbReference type="FunFam" id="1.10.1790.10:FF:000001">
    <property type="entry name" value="Cryptic beta-glucoside bgl operon antiterminator"/>
    <property type="match status" value="1"/>
</dbReference>
<dbReference type="Gene3D" id="2.30.24.10">
    <property type="entry name" value="CAT RNA-binding domain"/>
    <property type="match status" value="1"/>
</dbReference>
<dbReference type="Gene3D" id="1.10.1790.10">
    <property type="entry name" value="PRD domain"/>
    <property type="match status" value="2"/>
</dbReference>
<dbReference type="InterPro" id="IPR050661">
    <property type="entry name" value="BglG_antiterminators"/>
</dbReference>
<dbReference type="InterPro" id="IPR004341">
    <property type="entry name" value="CAT_RNA-bd_dom"/>
</dbReference>
<dbReference type="InterPro" id="IPR036650">
    <property type="entry name" value="CAT_RNA-bd_dom_sf"/>
</dbReference>
<dbReference type="InterPro" id="IPR011608">
    <property type="entry name" value="PRD"/>
</dbReference>
<dbReference type="InterPro" id="IPR036634">
    <property type="entry name" value="PRD_sf"/>
</dbReference>
<dbReference type="InterPro" id="IPR001550">
    <property type="entry name" value="Transcrpt_antitermin_CS"/>
</dbReference>
<dbReference type="NCBIfam" id="NF046042">
    <property type="entry name" value="LicT"/>
    <property type="match status" value="1"/>
</dbReference>
<dbReference type="NCBIfam" id="NF007295">
    <property type="entry name" value="PRK09772.1"/>
    <property type="match status" value="1"/>
</dbReference>
<dbReference type="PANTHER" id="PTHR30185">
    <property type="entry name" value="CRYPTIC BETA-GLUCOSIDE BGL OPERON ANTITERMINATOR"/>
    <property type="match status" value="1"/>
</dbReference>
<dbReference type="PANTHER" id="PTHR30185:SF15">
    <property type="entry name" value="CRYPTIC BETA-GLUCOSIDE BGL OPERON ANTITERMINATOR"/>
    <property type="match status" value="1"/>
</dbReference>
<dbReference type="Pfam" id="PF03123">
    <property type="entry name" value="CAT_RBD"/>
    <property type="match status" value="1"/>
</dbReference>
<dbReference type="Pfam" id="PF00874">
    <property type="entry name" value="PRD"/>
    <property type="match status" value="2"/>
</dbReference>
<dbReference type="SMART" id="SM01061">
    <property type="entry name" value="CAT_RBD"/>
    <property type="match status" value="1"/>
</dbReference>
<dbReference type="SUPFAM" id="SSF63520">
    <property type="entry name" value="PTS-regulatory domain, PRD"/>
    <property type="match status" value="2"/>
</dbReference>
<dbReference type="SUPFAM" id="SSF50151">
    <property type="entry name" value="SacY-like RNA-binding domain"/>
    <property type="match status" value="1"/>
</dbReference>
<dbReference type="PROSITE" id="PS00654">
    <property type="entry name" value="PRD_1"/>
    <property type="match status" value="1"/>
</dbReference>
<dbReference type="PROSITE" id="PS51372">
    <property type="entry name" value="PRD_2"/>
    <property type="match status" value="2"/>
</dbReference>
<keyword id="KW-0010">Activator</keyword>
<keyword id="KW-0597">Phosphoprotein</keyword>
<keyword id="KW-1185">Reference proteome</keyword>
<keyword id="KW-0677">Repeat</keyword>
<keyword id="KW-0694">RNA-binding</keyword>
<keyword id="KW-0804">Transcription</keyword>
<keyword id="KW-0805">Transcription regulation</keyword>
<comment type="function">
    <text>Mediates the positive regulation of the beta-glucoside (bgl) operon by functioning as a transcriptional antiterminator. This is an RNA-binding protein that recognizes a specific sequence located just upstream of two termination sites within the operon.</text>
</comment>
<comment type="interaction">
    <interactant intactId="EBI-545674">
        <id>P11989</id>
    </interactant>
    <interactant intactId="EBI-549140">
        <id>P06710</id>
        <label>dnaX</label>
    </interactant>
    <organismsDiffer>false</organismsDiffer>
    <experiments>3</experiments>
</comment>
<comment type="interaction">
    <interactant intactId="EBI-545674">
        <id>P11989</id>
    </interactant>
    <interactant intactId="EBI-902853">
        <id>P0AA04</id>
        <label>ptsH</label>
    </interactant>
    <organismsDiffer>false</organismsDiffer>
    <experiments>5</experiments>
</comment>
<comment type="interaction">
    <interactant intactId="EBI-545674">
        <id>P11989</id>
    </interactant>
    <interactant intactId="EBI-551533">
        <id>P08839</id>
        <label>ptsI</label>
    </interactant>
    <organismsDiffer>false</organismsDiffer>
    <experiments>3</experiments>
</comment>
<comment type="interaction">
    <interactant intactId="EBI-545674">
        <id>P11989</id>
    </interactant>
    <interactant intactId="EBI-545731">
        <id>P77700</id>
        <label>yahB</label>
    </interactant>
    <organismsDiffer>false</organismsDiffer>
    <experiments>4</experiments>
</comment>
<comment type="PTM">
    <text>Phosphorylated and inactivated by BglF (eII-bgl). The degree of phosphorylation is dependent on the presence or absence of beta-glucosides which act as inducers of the operon expression. Addition of inducer result in the rapid dephosphorylation of BglG.</text>
</comment>
<comment type="similarity">
    <text evidence="2">Belongs to the transcriptional antiterminator BglG family.</text>
</comment>
<accession>P11989</accession>
<accession>Q2M841</accession>
<accession>Q47078</accession>
<sequence length="278" mass="32097">MNMQITKILNNNVVVVIDDQQREKVVMGRGIGFQKRAGERINSSGIEKEYALSSHELNGRLSELLSHIPLEVMATCDRIISLAQERLGKLQDSIYISLTDHCQFAIKRFQQNVLLPNPLLWDIQRLYPKEFQLGEEALTIIDKRLGVQLPKDEVGFIAMHLVSAQMSGNMEDVAGVTQLMREMLQLIKFQFSLNYQEESLSYQRLVTHLKFLSWRILEHASINDSDESLQQAVKQNYPQAWQCAERIAIFIGLQYQRKISPAEIMFLAINIERVRKEH</sequence>
<evidence type="ECO:0000255" key="1">
    <source>
        <dbReference type="PROSITE-ProRule" id="PRU00704"/>
    </source>
</evidence>
<evidence type="ECO:0000305" key="2"/>
<proteinExistence type="evidence at protein level"/>
<gene>
    <name type="primary">bglG</name>
    <name type="synonym">bglC</name>
    <name type="ordered locus">b3723</name>
    <name type="ordered locus">JW3701</name>
</gene>
<protein>
    <recommendedName>
        <fullName>Cryptic beta-glucoside bgl operon antiterminator</fullName>
    </recommendedName>
</protein>
<reference key="1">
    <citation type="journal article" date="1987" name="J. Bacteriol.">
        <title>Beta-glucoside (bgl) operon of Escherichia coli K-12: nucleotide sequence, genetic organization, and possible evolutionary relationship to regulatory components of two Bacillus subtilis genes.</title>
        <authorList>
            <person name="Schnetz K."/>
            <person name="Toloczyki C."/>
            <person name="Rak B."/>
        </authorList>
    </citation>
    <scope>NUCLEOTIDE SEQUENCE [GENOMIC DNA]</scope>
    <source>
        <strain>K12</strain>
    </source>
</reference>
<reference key="2">
    <citation type="journal article" date="1993" name="Genomics">
        <title>DNA sequence and analysis of 136 kilobases of the Escherichia coli genome: organizational symmetry around the origin of replication.</title>
        <authorList>
            <person name="Burland V.D."/>
            <person name="Plunkett G. III"/>
            <person name="Daniels D.L."/>
            <person name="Blattner F.R."/>
        </authorList>
    </citation>
    <scope>NUCLEOTIDE SEQUENCE [LARGE SCALE GENOMIC DNA]</scope>
    <source>
        <strain>K12 / MG1655 / ATCC 47076</strain>
    </source>
</reference>
<reference key="3">
    <citation type="journal article" date="1997" name="Science">
        <title>The complete genome sequence of Escherichia coli K-12.</title>
        <authorList>
            <person name="Blattner F.R."/>
            <person name="Plunkett G. III"/>
            <person name="Bloch C.A."/>
            <person name="Perna N.T."/>
            <person name="Burland V."/>
            <person name="Riley M."/>
            <person name="Collado-Vides J."/>
            <person name="Glasner J.D."/>
            <person name="Rode C.K."/>
            <person name="Mayhew G.F."/>
            <person name="Gregor J."/>
            <person name="Davis N.W."/>
            <person name="Kirkpatrick H.A."/>
            <person name="Goeden M.A."/>
            <person name="Rose D.J."/>
            <person name="Mau B."/>
            <person name="Shao Y."/>
        </authorList>
    </citation>
    <scope>NUCLEOTIDE SEQUENCE [LARGE SCALE GENOMIC DNA]</scope>
    <source>
        <strain>K12 / MG1655 / ATCC 47076</strain>
    </source>
</reference>
<reference key="4">
    <citation type="journal article" date="2006" name="Mol. Syst. Biol.">
        <title>Highly accurate genome sequences of Escherichia coli K-12 strains MG1655 and W3110.</title>
        <authorList>
            <person name="Hayashi K."/>
            <person name="Morooka N."/>
            <person name="Yamamoto Y."/>
            <person name="Fujita K."/>
            <person name="Isono K."/>
            <person name="Choi S."/>
            <person name="Ohtsubo E."/>
            <person name="Baba T."/>
            <person name="Wanner B.L."/>
            <person name="Mori H."/>
            <person name="Horiuchi T."/>
        </authorList>
    </citation>
    <scope>NUCLEOTIDE SEQUENCE [LARGE SCALE GENOMIC DNA]</scope>
    <source>
        <strain>K12 / W3110 / ATCC 27325 / DSM 5911</strain>
    </source>
</reference>
<reference key="5">
    <citation type="journal article" date="1987" name="Cell">
        <title>A bacterial gene involved in transcription antitermination: regulation at a rho-independent terminator in the bgl operon of E. coli.</title>
        <authorList>
            <person name="Mahadevan S."/>
            <person name="Wright A."/>
        </authorList>
    </citation>
    <scope>NUCLEOTIDE SEQUENCE [GENOMIC DNA] OF 1-197</scope>
    <source>
        <strain>K12</strain>
    </source>
</reference>
<reference key="6">
    <citation type="journal article" date="1987" name="J. Gen. Microbiol.">
        <title>Nucleotide sequence of bglC, the gene specifying enzymeIIbgl of the PEP:sugar phosphotransferase system in Escherichia coli K12, and overexpression of the gene product.</title>
        <authorList>
            <person name="Bramley H.F."/>
            <person name="Kornberg H.L."/>
        </authorList>
    </citation>
    <scope>NUCLEOTIDE SEQUENCE [GENOMIC DNA] OF 264-278</scope>
</reference>
<reference key="7">
    <citation type="journal article" date="1990" name="Science">
        <title>Regulation of activity of a transcriptional anti-terminator in E. coli by phosphorylation in vivo.</title>
        <authorList>
            <person name="Amster-Choder O."/>
            <person name="Wright A."/>
        </authorList>
    </citation>
    <scope>REGULATION BY PHOSPHORYLATION</scope>
</reference>
<reference key="8">
    <citation type="journal article" date="1990" name="Proc. Natl. Acad. Sci. U.S.A.">
        <title>Beta-glucoside permease represses the bgl operon of Escherichia coli by phosphorylation of the antiterminator protein and also interacts with glucose-specific enzyme III, the key element in catabolite control.</title>
        <authorList>
            <person name="Schnetz K."/>
            <person name="Rak B."/>
        </authorList>
    </citation>
    <scope>REGULATION BY PHOSPHORYLATION</scope>
</reference>
<reference key="9">
    <citation type="journal article" date="1990" name="Cell">
        <title>Transcriptional antitermination in the bgl operon of E. coli is modulated by a specific RNA binding protein.</title>
        <authorList>
            <person name="Houman F."/>
            <person name="Diaz-Torre M.R."/>
            <person name="Wright A."/>
        </authorList>
    </citation>
    <scope>RNA-BINDING</scope>
</reference>
<feature type="chain" id="PRO_0000204244" description="Cryptic beta-glucoside bgl operon antiterminator">
    <location>
        <begin position="1"/>
        <end position="278"/>
    </location>
</feature>
<feature type="domain" description="PRD 1" evidence="1">
    <location>
        <begin position="67"/>
        <end position="171"/>
    </location>
</feature>
<feature type="domain" description="PRD 2" evidence="1">
    <location>
        <begin position="172"/>
        <end position="278"/>
    </location>
</feature>
<organism>
    <name type="scientific">Escherichia coli (strain K12)</name>
    <dbReference type="NCBI Taxonomy" id="83333"/>
    <lineage>
        <taxon>Bacteria</taxon>
        <taxon>Pseudomonadati</taxon>
        <taxon>Pseudomonadota</taxon>
        <taxon>Gammaproteobacteria</taxon>
        <taxon>Enterobacterales</taxon>
        <taxon>Enterobacteriaceae</taxon>
        <taxon>Escherichia</taxon>
    </lineage>
</organism>